<comment type="catalytic activity">
    <reaction>
        <text>beta-D-fructose 1,6-bisphosphate + H2O = beta-D-fructose 6-phosphate + phosphate</text>
        <dbReference type="Rhea" id="RHEA:11064"/>
        <dbReference type="ChEBI" id="CHEBI:15377"/>
        <dbReference type="ChEBI" id="CHEBI:32966"/>
        <dbReference type="ChEBI" id="CHEBI:43474"/>
        <dbReference type="ChEBI" id="CHEBI:57634"/>
        <dbReference type="EC" id="3.1.3.11"/>
    </reaction>
</comment>
<comment type="cofactor">
    <cofactor evidence="1">
        <name>Mg(2+)</name>
        <dbReference type="ChEBI" id="CHEBI:18420"/>
    </cofactor>
    <text evidence="1">Binds 3 Mg(2+) ions per subunit.</text>
</comment>
<comment type="subcellular location">
    <subcellularLocation>
        <location evidence="1">Cytoplasm</location>
    </subcellularLocation>
</comment>
<comment type="miscellaneous">
    <text>In plants there are two FBPase isozymes: one in the cytosol and the other in the chloroplast.</text>
</comment>
<comment type="similarity">
    <text evidence="2">Belongs to the FBPase class 1 family.</text>
</comment>
<accession>Q9SDL8</accession>
<sequence>MDHEADAYRTDLMTITRYVLNEQSRNPEARGDLTILLSHIVLGCKFVASAVNKAGLAKLIGLAGETNVQGEEQKKLDVLSNEVFVKALVSSGRTCVLVSEEDEEATFVDPALRGKYCVCFDPLDGSSNIDCGVSIGTIFGIYMIKDKDNVTLEDVLQPGKNMVAAGYCMYGSSCTLVLSTGNGVNGFTLDPSLGEFILTHPDIKIPKKGKIYSVNEGNAKNWDEPTAKFVEKCKFPKDGSSPKSLRYIGSMVADVHRTLLYGGVFLYPADKKSPNGKLRVLYEVFPMSFLMEQAGGQSFTGKERALDLVPTKIHERSPIFLGSFEDVEEIKGLYAAQAKLEHNH</sequence>
<organism>
    <name type="scientific">Oryza coarctata</name>
    <name type="common">Wild rice</name>
    <name type="synonym">Porteresia coarctata</name>
    <dbReference type="NCBI Taxonomy" id="77588"/>
    <lineage>
        <taxon>Eukaryota</taxon>
        <taxon>Viridiplantae</taxon>
        <taxon>Streptophyta</taxon>
        <taxon>Embryophyta</taxon>
        <taxon>Tracheophyta</taxon>
        <taxon>Spermatophyta</taxon>
        <taxon>Magnoliopsida</taxon>
        <taxon>Liliopsida</taxon>
        <taxon>Poales</taxon>
        <taxon>Poaceae</taxon>
        <taxon>BOP clade</taxon>
        <taxon>Oryzoideae</taxon>
        <taxon>Oryzeae</taxon>
        <taxon>Oryzinae</taxon>
        <taxon>Oryza</taxon>
    </lineage>
</organism>
<protein>
    <recommendedName>
        <fullName>Fructose-1,6-bisphosphatase, cytosolic</fullName>
        <shortName>FBPase</shortName>
        <ecNumber>3.1.3.11</ecNumber>
    </recommendedName>
    <alternativeName>
        <fullName>D-fructose-1,6-bisphosphate 1-phosphohydrolase</fullName>
    </alternativeName>
</protein>
<proteinExistence type="evidence at transcript level"/>
<dbReference type="EC" id="3.1.3.11"/>
<dbReference type="EMBL" id="AF218845">
    <property type="protein sequence ID" value="AAF23509.1"/>
    <property type="molecule type" value="mRNA"/>
</dbReference>
<dbReference type="SMR" id="Q9SDL8"/>
<dbReference type="GO" id="GO:0005829">
    <property type="term" value="C:cytosol"/>
    <property type="evidence" value="ECO:0007669"/>
    <property type="project" value="TreeGrafter"/>
</dbReference>
<dbReference type="GO" id="GO:0042132">
    <property type="term" value="F:fructose 1,6-bisphosphate 1-phosphatase activity"/>
    <property type="evidence" value="ECO:0007669"/>
    <property type="project" value="UniProtKB-EC"/>
</dbReference>
<dbReference type="GO" id="GO:0046872">
    <property type="term" value="F:metal ion binding"/>
    <property type="evidence" value="ECO:0007669"/>
    <property type="project" value="UniProtKB-KW"/>
</dbReference>
<dbReference type="GO" id="GO:0030388">
    <property type="term" value="P:fructose 1,6-bisphosphate metabolic process"/>
    <property type="evidence" value="ECO:0007669"/>
    <property type="project" value="TreeGrafter"/>
</dbReference>
<dbReference type="GO" id="GO:0006002">
    <property type="term" value="P:fructose 6-phosphate metabolic process"/>
    <property type="evidence" value="ECO:0007669"/>
    <property type="project" value="TreeGrafter"/>
</dbReference>
<dbReference type="GO" id="GO:0006000">
    <property type="term" value="P:fructose metabolic process"/>
    <property type="evidence" value="ECO:0007669"/>
    <property type="project" value="TreeGrafter"/>
</dbReference>
<dbReference type="GO" id="GO:0006094">
    <property type="term" value="P:gluconeogenesis"/>
    <property type="evidence" value="ECO:0007669"/>
    <property type="project" value="TreeGrafter"/>
</dbReference>
<dbReference type="GO" id="GO:0005986">
    <property type="term" value="P:sucrose biosynthetic process"/>
    <property type="evidence" value="ECO:0007669"/>
    <property type="project" value="TreeGrafter"/>
</dbReference>
<dbReference type="CDD" id="cd00354">
    <property type="entry name" value="FBPase"/>
    <property type="match status" value="1"/>
</dbReference>
<dbReference type="FunFam" id="3.40.190.80:FF:000001">
    <property type="entry name" value="Fructose-1,6-bisphosphatase class 1"/>
    <property type="match status" value="1"/>
</dbReference>
<dbReference type="FunFam" id="3.30.540.10:FF:000008">
    <property type="entry name" value="Fructose-1,6-bisphosphatase, cytosolic"/>
    <property type="match status" value="1"/>
</dbReference>
<dbReference type="Gene3D" id="3.40.190.80">
    <property type="match status" value="1"/>
</dbReference>
<dbReference type="Gene3D" id="3.30.540.10">
    <property type="entry name" value="Fructose-1,6-Bisphosphatase, subunit A, domain 1"/>
    <property type="match status" value="1"/>
</dbReference>
<dbReference type="HAMAP" id="MF_01855">
    <property type="entry name" value="FBPase_class1"/>
    <property type="match status" value="1"/>
</dbReference>
<dbReference type="InterPro" id="IPR044015">
    <property type="entry name" value="FBPase_C_dom"/>
</dbReference>
<dbReference type="InterPro" id="IPR000146">
    <property type="entry name" value="FBPase_class-1"/>
</dbReference>
<dbReference type="InterPro" id="IPR033391">
    <property type="entry name" value="FBPase_N"/>
</dbReference>
<dbReference type="InterPro" id="IPR028343">
    <property type="entry name" value="FBPtase"/>
</dbReference>
<dbReference type="InterPro" id="IPR020548">
    <property type="entry name" value="Fructose_bisphosphatase_AS"/>
</dbReference>
<dbReference type="NCBIfam" id="NF006778">
    <property type="entry name" value="PRK09293.1-1"/>
    <property type="match status" value="1"/>
</dbReference>
<dbReference type="NCBIfam" id="NF006779">
    <property type="entry name" value="PRK09293.1-3"/>
    <property type="match status" value="1"/>
</dbReference>
<dbReference type="PANTHER" id="PTHR11556:SF41">
    <property type="entry name" value="FRUCTOSE-1,6-BISPHOSPHATASE, CYTOSOLIC"/>
    <property type="match status" value="1"/>
</dbReference>
<dbReference type="PANTHER" id="PTHR11556">
    <property type="entry name" value="FRUCTOSE-1,6-BISPHOSPHATASE-RELATED"/>
    <property type="match status" value="1"/>
</dbReference>
<dbReference type="Pfam" id="PF00316">
    <property type="entry name" value="FBPase"/>
    <property type="match status" value="1"/>
</dbReference>
<dbReference type="Pfam" id="PF18913">
    <property type="entry name" value="FBPase_C"/>
    <property type="match status" value="1"/>
</dbReference>
<dbReference type="PIRSF" id="PIRSF500210">
    <property type="entry name" value="FBPtase"/>
    <property type="match status" value="1"/>
</dbReference>
<dbReference type="PIRSF" id="PIRSF000904">
    <property type="entry name" value="FBPtase_SBPase"/>
    <property type="match status" value="1"/>
</dbReference>
<dbReference type="PRINTS" id="PR00115">
    <property type="entry name" value="F16BPHPHTASE"/>
</dbReference>
<dbReference type="SUPFAM" id="SSF56655">
    <property type="entry name" value="Carbohydrate phosphatase"/>
    <property type="match status" value="1"/>
</dbReference>
<dbReference type="PROSITE" id="PS00124">
    <property type="entry name" value="FBPASE"/>
    <property type="match status" value="1"/>
</dbReference>
<feature type="chain" id="PRO_0000200516" description="Fructose-1,6-bisphosphatase, cytosolic">
    <location>
        <begin position="1"/>
        <end position="344"/>
    </location>
</feature>
<feature type="binding site" evidence="1">
    <location>
        <position position="71"/>
    </location>
    <ligand>
        <name>Mg(2+)</name>
        <dbReference type="ChEBI" id="CHEBI:18420"/>
        <label>1</label>
    </ligand>
</feature>
<feature type="binding site" evidence="1">
    <location>
        <position position="100"/>
    </location>
    <ligand>
        <name>Mg(2+)</name>
        <dbReference type="ChEBI" id="CHEBI:18420"/>
        <label>1</label>
    </ligand>
</feature>
<feature type="binding site" evidence="1">
    <location>
        <position position="100"/>
    </location>
    <ligand>
        <name>Mg(2+)</name>
        <dbReference type="ChEBI" id="CHEBI:18420"/>
        <label>2</label>
    </ligand>
</feature>
<feature type="binding site" evidence="1">
    <location>
        <position position="121"/>
    </location>
    <ligand>
        <name>Mg(2+)</name>
        <dbReference type="ChEBI" id="CHEBI:18420"/>
        <label>2</label>
    </ligand>
</feature>
<feature type="binding site" evidence="1">
    <location>
        <position position="121"/>
    </location>
    <ligand>
        <name>Mg(2+)</name>
        <dbReference type="ChEBI" id="CHEBI:18420"/>
        <label>3</label>
    </ligand>
</feature>
<feature type="binding site" evidence="1">
    <location>
        <position position="123"/>
    </location>
    <ligand>
        <name>Mg(2+)</name>
        <dbReference type="ChEBI" id="CHEBI:18420"/>
        <label>2</label>
    </ligand>
</feature>
<feature type="binding site" evidence="1">
    <location>
        <begin position="124"/>
        <end position="127"/>
    </location>
    <ligand>
        <name>substrate</name>
    </ligand>
</feature>
<feature type="binding site" evidence="1">
    <location>
        <position position="124"/>
    </location>
    <ligand>
        <name>Mg(2+)</name>
        <dbReference type="ChEBI" id="CHEBI:18420"/>
        <label>3</label>
    </ligand>
</feature>
<feature type="binding site" evidence="1">
    <location>
        <position position="215"/>
    </location>
    <ligand>
        <name>substrate</name>
    </ligand>
</feature>
<feature type="binding site" evidence="1">
    <location>
        <position position="247"/>
    </location>
    <ligand>
        <name>substrate</name>
    </ligand>
</feature>
<feature type="binding site" evidence="1">
    <location>
        <position position="267"/>
    </location>
    <ligand>
        <name>substrate</name>
    </ligand>
</feature>
<feature type="binding site" evidence="1">
    <location>
        <position position="277"/>
    </location>
    <ligand>
        <name>substrate</name>
    </ligand>
</feature>
<feature type="binding site" evidence="1">
    <location>
        <position position="283"/>
    </location>
    <ligand>
        <name>Mg(2+)</name>
        <dbReference type="ChEBI" id="CHEBI:18420"/>
        <label>3</label>
    </ligand>
</feature>
<keyword id="KW-0119">Carbohydrate metabolism</keyword>
<keyword id="KW-0963">Cytoplasm</keyword>
<keyword id="KW-0378">Hydrolase</keyword>
<keyword id="KW-0460">Magnesium</keyword>
<keyword id="KW-0479">Metal-binding</keyword>
<name>F16P2_ORYCO</name>
<evidence type="ECO:0000250" key="1"/>
<evidence type="ECO:0000305" key="2"/>
<reference key="1">
    <citation type="submission" date="1999-12" db="EMBL/GenBank/DDBJ databases">
        <title>Fructose-1,6-bisphosphatase from wild rice.</title>
        <authorList>
            <person name="Majumder A.L."/>
            <person name="Zhao C.-S."/>
            <person name="Lohia A."/>
            <person name="Bohnert H.J."/>
        </authorList>
    </citation>
    <scope>NUCLEOTIDE SEQUENCE [MRNA]</scope>
</reference>